<reference key="1">
    <citation type="submission" date="2007-09" db="EMBL/GenBank/DDBJ databases">
        <title>Complete sequence of chromosome of Serratia proteamaculans 568.</title>
        <authorList>
            <consortium name="US DOE Joint Genome Institute"/>
            <person name="Copeland A."/>
            <person name="Lucas S."/>
            <person name="Lapidus A."/>
            <person name="Barry K."/>
            <person name="Glavina del Rio T."/>
            <person name="Dalin E."/>
            <person name="Tice H."/>
            <person name="Pitluck S."/>
            <person name="Chain P."/>
            <person name="Malfatti S."/>
            <person name="Shin M."/>
            <person name="Vergez L."/>
            <person name="Schmutz J."/>
            <person name="Larimer F."/>
            <person name="Land M."/>
            <person name="Hauser L."/>
            <person name="Kyrpides N."/>
            <person name="Kim E."/>
            <person name="Taghavi S."/>
            <person name="Newman L."/>
            <person name="Vangronsveld J."/>
            <person name="van der Lelie D."/>
            <person name="Richardson P."/>
        </authorList>
    </citation>
    <scope>NUCLEOTIDE SEQUENCE [LARGE SCALE GENOMIC DNA]</scope>
    <source>
        <strain>568</strain>
    </source>
</reference>
<name>ISPH_SERP5</name>
<protein>
    <recommendedName>
        <fullName evidence="1">4-hydroxy-3-methylbut-2-enyl diphosphate reductase</fullName>
        <shortName evidence="1">HMBPP reductase</shortName>
        <ecNumber evidence="1">1.17.7.4</ecNumber>
    </recommendedName>
</protein>
<feature type="chain" id="PRO_1000058510" description="4-hydroxy-3-methylbut-2-enyl diphosphate reductase">
    <location>
        <begin position="1"/>
        <end position="317"/>
    </location>
</feature>
<feature type="active site" description="Proton donor" evidence="1">
    <location>
        <position position="127"/>
    </location>
</feature>
<feature type="binding site" evidence="1">
    <location>
        <position position="12"/>
    </location>
    <ligand>
        <name>[4Fe-4S] cluster</name>
        <dbReference type="ChEBI" id="CHEBI:49883"/>
    </ligand>
</feature>
<feature type="binding site" evidence="1">
    <location>
        <position position="41"/>
    </location>
    <ligand>
        <name>(2E)-4-hydroxy-3-methylbut-2-enyl diphosphate</name>
        <dbReference type="ChEBI" id="CHEBI:128753"/>
    </ligand>
</feature>
<feature type="binding site" evidence="1">
    <location>
        <position position="41"/>
    </location>
    <ligand>
        <name>dimethylallyl diphosphate</name>
        <dbReference type="ChEBI" id="CHEBI:57623"/>
    </ligand>
</feature>
<feature type="binding site" evidence="1">
    <location>
        <position position="41"/>
    </location>
    <ligand>
        <name>isopentenyl diphosphate</name>
        <dbReference type="ChEBI" id="CHEBI:128769"/>
    </ligand>
</feature>
<feature type="binding site" evidence="1">
    <location>
        <position position="74"/>
    </location>
    <ligand>
        <name>(2E)-4-hydroxy-3-methylbut-2-enyl diphosphate</name>
        <dbReference type="ChEBI" id="CHEBI:128753"/>
    </ligand>
</feature>
<feature type="binding site" evidence="1">
    <location>
        <position position="74"/>
    </location>
    <ligand>
        <name>dimethylallyl diphosphate</name>
        <dbReference type="ChEBI" id="CHEBI:57623"/>
    </ligand>
</feature>
<feature type="binding site" evidence="1">
    <location>
        <position position="74"/>
    </location>
    <ligand>
        <name>isopentenyl diphosphate</name>
        <dbReference type="ChEBI" id="CHEBI:128769"/>
    </ligand>
</feature>
<feature type="binding site" evidence="1">
    <location>
        <position position="97"/>
    </location>
    <ligand>
        <name>[4Fe-4S] cluster</name>
        <dbReference type="ChEBI" id="CHEBI:49883"/>
    </ligand>
</feature>
<feature type="binding site" evidence="1">
    <location>
        <position position="125"/>
    </location>
    <ligand>
        <name>(2E)-4-hydroxy-3-methylbut-2-enyl diphosphate</name>
        <dbReference type="ChEBI" id="CHEBI:128753"/>
    </ligand>
</feature>
<feature type="binding site" evidence="1">
    <location>
        <position position="125"/>
    </location>
    <ligand>
        <name>dimethylallyl diphosphate</name>
        <dbReference type="ChEBI" id="CHEBI:57623"/>
    </ligand>
</feature>
<feature type="binding site" evidence="1">
    <location>
        <position position="125"/>
    </location>
    <ligand>
        <name>isopentenyl diphosphate</name>
        <dbReference type="ChEBI" id="CHEBI:128769"/>
    </ligand>
</feature>
<feature type="binding site" evidence="1">
    <location>
        <position position="168"/>
    </location>
    <ligand>
        <name>(2E)-4-hydroxy-3-methylbut-2-enyl diphosphate</name>
        <dbReference type="ChEBI" id="CHEBI:128753"/>
    </ligand>
</feature>
<feature type="binding site" evidence="1">
    <location>
        <position position="198"/>
    </location>
    <ligand>
        <name>[4Fe-4S] cluster</name>
        <dbReference type="ChEBI" id="CHEBI:49883"/>
    </ligand>
</feature>
<feature type="binding site" evidence="1">
    <location>
        <position position="226"/>
    </location>
    <ligand>
        <name>(2E)-4-hydroxy-3-methylbut-2-enyl diphosphate</name>
        <dbReference type="ChEBI" id="CHEBI:128753"/>
    </ligand>
</feature>
<feature type="binding site" evidence="1">
    <location>
        <position position="226"/>
    </location>
    <ligand>
        <name>dimethylallyl diphosphate</name>
        <dbReference type="ChEBI" id="CHEBI:57623"/>
    </ligand>
</feature>
<feature type="binding site" evidence="1">
    <location>
        <position position="226"/>
    </location>
    <ligand>
        <name>isopentenyl diphosphate</name>
        <dbReference type="ChEBI" id="CHEBI:128769"/>
    </ligand>
</feature>
<feature type="binding site" evidence="1">
    <location>
        <position position="227"/>
    </location>
    <ligand>
        <name>(2E)-4-hydroxy-3-methylbut-2-enyl diphosphate</name>
        <dbReference type="ChEBI" id="CHEBI:128753"/>
    </ligand>
</feature>
<feature type="binding site" evidence="1">
    <location>
        <position position="227"/>
    </location>
    <ligand>
        <name>dimethylallyl diphosphate</name>
        <dbReference type="ChEBI" id="CHEBI:57623"/>
    </ligand>
</feature>
<feature type="binding site" evidence="1">
    <location>
        <position position="227"/>
    </location>
    <ligand>
        <name>isopentenyl diphosphate</name>
        <dbReference type="ChEBI" id="CHEBI:128769"/>
    </ligand>
</feature>
<feature type="binding site" evidence="1">
    <location>
        <position position="228"/>
    </location>
    <ligand>
        <name>(2E)-4-hydroxy-3-methylbut-2-enyl diphosphate</name>
        <dbReference type="ChEBI" id="CHEBI:128753"/>
    </ligand>
</feature>
<feature type="binding site" evidence="1">
    <location>
        <position position="228"/>
    </location>
    <ligand>
        <name>dimethylallyl diphosphate</name>
        <dbReference type="ChEBI" id="CHEBI:57623"/>
    </ligand>
</feature>
<feature type="binding site" evidence="1">
    <location>
        <position position="228"/>
    </location>
    <ligand>
        <name>isopentenyl diphosphate</name>
        <dbReference type="ChEBI" id="CHEBI:128769"/>
    </ligand>
</feature>
<feature type="binding site" evidence="1">
    <location>
        <position position="270"/>
    </location>
    <ligand>
        <name>(2E)-4-hydroxy-3-methylbut-2-enyl diphosphate</name>
        <dbReference type="ChEBI" id="CHEBI:128753"/>
    </ligand>
</feature>
<feature type="binding site" evidence="1">
    <location>
        <position position="270"/>
    </location>
    <ligand>
        <name>dimethylallyl diphosphate</name>
        <dbReference type="ChEBI" id="CHEBI:57623"/>
    </ligand>
</feature>
<feature type="binding site" evidence="1">
    <location>
        <position position="270"/>
    </location>
    <ligand>
        <name>isopentenyl diphosphate</name>
        <dbReference type="ChEBI" id="CHEBI:128769"/>
    </ligand>
</feature>
<comment type="function">
    <text evidence="1">Catalyzes the conversion of 1-hydroxy-2-methyl-2-(E)-butenyl 4-diphosphate (HMBPP) into a mixture of isopentenyl diphosphate (IPP) and dimethylallyl diphosphate (DMAPP). Acts in the terminal step of the DOXP/MEP pathway for isoprenoid precursor biosynthesis.</text>
</comment>
<comment type="catalytic activity">
    <reaction evidence="1">
        <text>isopentenyl diphosphate + 2 oxidized [2Fe-2S]-[ferredoxin] + H2O = (2E)-4-hydroxy-3-methylbut-2-enyl diphosphate + 2 reduced [2Fe-2S]-[ferredoxin] + 2 H(+)</text>
        <dbReference type="Rhea" id="RHEA:24488"/>
        <dbReference type="Rhea" id="RHEA-COMP:10000"/>
        <dbReference type="Rhea" id="RHEA-COMP:10001"/>
        <dbReference type="ChEBI" id="CHEBI:15377"/>
        <dbReference type="ChEBI" id="CHEBI:15378"/>
        <dbReference type="ChEBI" id="CHEBI:33737"/>
        <dbReference type="ChEBI" id="CHEBI:33738"/>
        <dbReference type="ChEBI" id="CHEBI:128753"/>
        <dbReference type="ChEBI" id="CHEBI:128769"/>
        <dbReference type="EC" id="1.17.7.4"/>
    </reaction>
</comment>
<comment type="catalytic activity">
    <reaction evidence="1">
        <text>dimethylallyl diphosphate + 2 oxidized [2Fe-2S]-[ferredoxin] + H2O = (2E)-4-hydroxy-3-methylbut-2-enyl diphosphate + 2 reduced [2Fe-2S]-[ferredoxin] + 2 H(+)</text>
        <dbReference type="Rhea" id="RHEA:24825"/>
        <dbReference type="Rhea" id="RHEA-COMP:10000"/>
        <dbReference type="Rhea" id="RHEA-COMP:10001"/>
        <dbReference type="ChEBI" id="CHEBI:15377"/>
        <dbReference type="ChEBI" id="CHEBI:15378"/>
        <dbReference type="ChEBI" id="CHEBI:33737"/>
        <dbReference type="ChEBI" id="CHEBI:33738"/>
        <dbReference type="ChEBI" id="CHEBI:57623"/>
        <dbReference type="ChEBI" id="CHEBI:128753"/>
        <dbReference type="EC" id="1.17.7.4"/>
    </reaction>
</comment>
<comment type="cofactor">
    <cofactor evidence="1">
        <name>[4Fe-4S] cluster</name>
        <dbReference type="ChEBI" id="CHEBI:49883"/>
    </cofactor>
    <text evidence="1">Binds 1 [4Fe-4S] cluster per subunit.</text>
</comment>
<comment type="pathway">
    <text evidence="1">Isoprenoid biosynthesis; dimethylallyl diphosphate biosynthesis; dimethylallyl diphosphate from (2E)-4-hydroxy-3-methylbutenyl diphosphate: step 1/1.</text>
</comment>
<comment type="pathway">
    <text evidence="1">Isoprenoid biosynthesis; isopentenyl diphosphate biosynthesis via DXP pathway; isopentenyl diphosphate from 1-deoxy-D-xylulose 5-phosphate: step 6/6.</text>
</comment>
<comment type="subunit">
    <text evidence="1">Homodimer.</text>
</comment>
<comment type="similarity">
    <text evidence="1">Belongs to the IspH family.</text>
</comment>
<evidence type="ECO:0000255" key="1">
    <source>
        <dbReference type="HAMAP-Rule" id="MF_00191"/>
    </source>
</evidence>
<keyword id="KW-0004">4Fe-4S</keyword>
<keyword id="KW-0408">Iron</keyword>
<keyword id="KW-0411">Iron-sulfur</keyword>
<keyword id="KW-0414">Isoprene biosynthesis</keyword>
<keyword id="KW-0479">Metal-binding</keyword>
<keyword id="KW-0560">Oxidoreductase</keyword>
<proteinExistence type="inferred from homology"/>
<gene>
    <name evidence="1" type="primary">ispH</name>
    <name type="ordered locus">Spro_0701</name>
</gene>
<sequence>MQILLANPRGFCAGVDRAISIVERALEIYGAPIYVRHEVVHNRYVVDSLRERGAVFIEEITEVPDGSILIFSAHGVSQAVRAEAKARDLTMLFDATCPLVTKVHMEVARASRRGTEAILIGHAGHPEVEGTMGQYSNPKGGMYLVESPDDVWKLQVKDESNLCFMTQTTLSVDDTSDVIDALRKRFPSIIGPRKDDICYATTNRQEAVRNLAGDADVVLVVGSKNSSNSNRLAELAQRVGKPAYLIDSAADIQEAWLKDAHNIGVTAGASAPDVLVQDVISRLKALGGVNVQEVSGREENIVFEVPKELRVDIKQVD</sequence>
<accession>A8G9L7</accession>
<dbReference type="EC" id="1.17.7.4" evidence="1"/>
<dbReference type="EMBL" id="CP000826">
    <property type="protein sequence ID" value="ABV39807.1"/>
    <property type="molecule type" value="Genomic_DNA"/>
</dbReference>
<dbReference type="SMR" id="A8G9L7"/>
<dbReference type="STRING" id="399741.Spro_0701"/>
<dbReference type="KEGG" id="spe:Spro_0701"/>
<dbReference type="eggNOG" id="COG0761">
    <property type="taxonomic scope" value="Bacteria"/>
</dbReference>
<dbReference type="HOGENOM" id="CLU_027486_1_0_6"/>
<dbReference type="OrthoDB" id="9804068at2"/>
<dbReference type="UniPathway" id="UPA00056">
    <property type="reaction ID" value="UER00097"/>
</dbReference>
<dbReference type="UniPathway" id="UPA00059">
    <property type="reaction ID" value="UER00105"/>
</dbReference>
<dbReference type="GO" id="GO:0051539">
    <property type="term" value="F:4 iron, 4 sulfur cluster binding"/>
    <property type="evidence" value="ECO:0007669"/>
    <property type="project" value="UniProtKB-UniRule"/>
</dbReference>
<dbReference type="GO" id="GO:0051745">
    <property type="term" value="F:4-hydroxy-3-methylbut-2-enyl diphosphate reductase activity"/>
    <property type="evidence" value="ECO:0007669"/>
    <property type="project" value="UniProtKB-UniRule"/>
</dbReference>
<dbReference type="GO" id="GO:0046872">
    <property type="term" value="F:metal ion binding"/>
    <property type="evidence" value="ECO:0007669"/>
    <property type="project" value="UniProtKB-KW"/>
</dbReference>
<dbReference type="GO" id="GO:0050992">
    <property type="term" value="P:dimethylallyl diphosphate biosynthetic process"/>
    <property type="evidence" value="ECO:0007669"/>
    <property type="project" value="UniProtKB-UniRule"/>
</dbReference>
<dbReference type="GO" id="GO:0019288">
    <property type="term" value="P:isopentenyl diphosphate biosynthetic process, methylerythritol 4-phosphate pathway"/>
    <property type="evidence" value="ECO:0007669"/>
    <property type="project" value="UniProtKB-UniRule"/>
</dbReference>
<dbReference type="GO" id="GO:0016114">
    <property type="term" value="P:terpenoid biosynthetic process"/>
    <property type="evidence" value="ECO:0007669"/>
    <property type="project" value="UniProtKB-UniRule"/>
</dbReference>
<dbReference type="CDD" id="cd13944">
    <property type="entry name" value="lytB_ispH"/>
    <property type="match status" value="1"/>
</dbReference>
<dbReference type="FunFam" id="3.40.50.11270:FF:000001">
    <property type="entry name" value="4-hydroxy-3-methylbut-2-enyl diphosphate reductase"/>
    <property type="match status" value="1"/>
</dbReference>
<dbReference type="Gene3D" id="3.40.50.11270">
    <property type="match status" value="1"/>
</dbReference>
<dbReference type="Gene3D" id="3.40.1010.20">
    <property type="entry name" value="4-hydroxy-3-methylbut-2-enyl diphosphate reductase, catalytic domain"/>
    <property type="match status" value="2"/>
</dbReference>
<dbReference type="HAMAP" id="MF_00191">
    <property type="entry name" value="IspH"/>
    <property type="match status" value="1"/>
</dbReference>
<dbReference type="InterPro" id="IPR003451">
    <property type="entry name" value="LytB/IspH"/>
</dbReference>
<dbReference type="NCBIfam" id="TIGR00216">
    <property type="entry name" value="ispH_lytB"/>
    <property type="match status" value="1"/>
</dbReference>
<dbReference type="NCBIfam" id="NF002188">
    <property type="entry name" value="PRK01045.1-2"/>
    <property type="match status" value="1"/>
</dbReference>
<dbReference type="NCBIfam" id="NF002190">
    <property type="entry name" value="PRK01045.1-4"/>
    <property type="match status" value="1"/>
</dbReference>
<dbReference type="PANTHER" id="PTHR30426">
    <property type="entry name" value="4-HYDROXY-3-METHYLBUT-2-ENYL DIPHOSPHATE REDUCTASE"/>
    <property type="match status" value="1"/>
</dbReference>
<dbReference type="PANTHER" id="PTHR30426:SF0">
    <property type="entry name" value="4-HYDROXY-3-METHYLBUT-2-ENYL DIPHOSPHATE REDUCTASE"/>
    <property type="match status" value="1"/>
</dbReference>
<dbReference type="Pfam" id="PF02401">
    <property type="entry name" value="LYTB"/>
    <property type="match status" value="1"/>
</dbReference>
<organism>
    <name type="scientific">Serratia proteamaculans (strain 568)</name>
    <dbReference type="NCBI Taxonomy" id="399741"/>
    <lineage>
        <taxon>Bacteria</taxon>
        <taxon>Pseudomonadati</taxon>
        <taxon>Pseudomonadota</taxon>
        <taxon>Gammaproteobacteria</taxon>
        <taxon>Enterobacterales</taxon>
        <taxon>Yersiniaceae</taxon>
        <taxon>Serratia</taxon>
    </lineage>
</organism>